<gene>
    <name type="ordered locus">XC_1365</name>
</gene>
<feature type="chain" id="PRO_0000258891" description="UPF0301 protein XC_1365">
    <location>
        <begin position="1"/>
        <end position="188"/>
    </location>
</feature>
<dbReference type="EMBL" id="CP000050">
    <property type="protein sequence ID" value="AAY48434.1"/>
    <property type="molecule type" value="Genomic_DNA"/>
</dbReference>
<dbReference type="RefSeq" id="WP_011037878.1">
    <property type="nucleotide sequence ID" value="NZ_CP155948.1"/>
</dbReference>
<dbReference type="SMR" id="Q4UWY9"/>
<dbReference type="KEGG" id="xcb:XC_1365"/>
<dbReference type="HOGENOM" id="CLU_057596_1_0_6"/>
<dbReference type="Proteomes" id="UP000000420">
    <property type="component" value="Chromosome"/>
</dbReference>
<dbReference type="GO" id="GO:0005829">
    <property type="term" value="C:cytosol"/>
    <property type="evidence" value="ECO:0007669"/>
    <property type="project" value="TreeGrafter"/>
</dbReference>
<dbReference type="Gene3D" id="3.40.1740.10">
    <property type="entry name" value="VC0467-like"/>
    <property type="match status" value="1"/>
</dbReference>
<dbReference type="HAMAP" id="MF_00758">
    <property type="entry name" value="UPF0301"/>
    <property type="match status" value="1"/>
</dbReference>
<dbReference type="InterPro" id="IPR003774">
    <property type="entry name" value="AlgH-like"/>
</dbReference>
<dbReference type="NCBIfam" id="NF001266">
    <property type="entry name" value="PRK00228.1-1"/>
    <property type="match status" value="1"/>
</dbReference>
<dbReference type="PANTHER" id="PTHR30327">
    <property type="entry name" value="UNCHARACTERIZED PROTEIN YQGE"/>
    <property type="match status" value="1"/>
</dbReference>
<dbReference type="PANTHER" id="PTHR30327:SF1">
    <property type="entry name" value="UPF0301 PROTEIN YQGE"/>
    <property type="match status" value="1"/>
</dbReference>
<dbReference type="Pfam" id="PF02622">
    <property type="entry name" value="DUF179"/>
    <property type="match status" value="1"/>
</dbReference>
<dbReference type="SUPFAM" id="SSF143456">
    <property type="entry name" value="VC0467-like"/>
    <property type="match status" value="1"/>
</dbReference>
<reference key="1">
    <citation type="journal article" date="2005" name="Genome Res.">
        <title>Comparative and functional genomic analyses of the pathogenicity of phytopathogen Xanthomonas campestris pv. campestris.</title>
        <authorList>
            <person name="Qian W."/>
            <person name="Jia Y."/>
            <person name="Ren S.-X."/>
            <person name="He Y.-Q."/>
            <person name="Feng J.-X."/>
            <person name="Lu L.-F."/>
            <person name="Sun Q."/>
            <person name="Ying G."/>
            <person name="Tang D.-J."/>
            <person name="Tang H."/>
            <person name="Wu W."/>
            <person name="Hao P."/>
            <person name="Wang L."/>
            <person name="Jiang B.-L."/>
            <person name="Zeng S."/>
            <person name="Gu W.-Y."/>
            <person name="Lu G."/>
            <person name="Rong L."/>
            <person name="Tian Y."/>
            <person name="Yao Z."/>
            <person name="Fu G."/>
            <person name="Chen B."/>
            <person name="Fang R."/>
            <person name="Qiang B."/>
            <person name="Chen Z."/>
            <person name="Zhao G.-P."/>
            <person name="Tang J.-L."/>
            <person name="He C."/>
        </authorList>
    </citation>
    <scope>NUCLEOTIDE SEQUENCE [LARGE SCALE GENOMIC DNA]</scope>
    <source>
        <strain>8004</strain>
    </source>
</reference>
<sequence length="188" mass="20118">MSVLPTPLANQLLIALPALSDPTFSRSVALICQHDENGAMGVLVNRPSEYTLGEVLSQMGIDTSDERLREQPVLSGGPVHPERGFVIHDDARAWDSSLEVGQGVYLTTSRDILEAMAAGDGPRNALVALGCAGWGAGQLEFELGENSWLTAPSDANVLFDTALEDRWQTAAGRIGVDLFRLTDYSGHA</sequence>
<accession>Q4UWY9</accession>
<comment type="similarity">
    <text evidence="1">Belongs to the UPF0301 (AlgH) family.</text>
</comment>
<organism>
    <name type="scientific">Xanthomonas campestris pv. campestris (strain 8004)</name>
    <dbReference type="NCBI Taxonomy" id="314565"/>
    <lineage>
        <taxon>Bacteria</taxon>
        <taxon>Pseudomonadati</taxon>
        <taxon>Pseudomonadota</taxon>
        <taxon>Gammaproteobacteria</taxon>
        <taxon>Lysobacterales</taxon>
        <taxon>Lysobacteraceae</taxon>
        <taxon>Xanthomonas</taxon>
    </lineage>
</organism>
<protein>
    <recommendedName>
        <fullName evidence="1">UPF0301 protein XC_1365</fullName>
    </recommendedName>
</protein>
<name>Y1365_XANC8</name>
<proteinExistence type="inferred from homology"/>
<evidence type="ECO:0000255" key="1">
    <source>
        <dbReference type="HAMAP-Rule" id="MF_00758"/>
    </source>
</evidence>